<gene>
    <name evidence="1" type="primary">minE</name>
    <name type="ordered locus">Bphy_0657</name>
</gene>
<name>MINE_PARP8</name>
<keyword id="KW-0131">Cell cycle</keyword>
<keyword id="KW-0132">Cell division</keyword>
<keyword id="KW-1185">Reference proteome</keyword>
<proteinExistence type="inferred from homology"/>
<feature type="chain" id="PRO_1000114208" description="Cell division topological specificity factor">
    <location>
        <begin position="1"/>
        <end position="84"/>
    </location>
</feature>
<comment type="function">
    <text evidence="1">Prevents the cell division inhibition by proteins MinC and MinD at internal division sites while permitting inhibition at polar sites. This ensures cell division at the proper site by restricting the formation of a division septum at the midpoint of the long axis of the cell.</text>
</comment>
<comment type="similarity">
    <text evidence="1">Belongs to the MinE family.</text>
</comment>
<dbReference type="EMBL" id="CP001043">
    <property type="protein sequence ID" value="ACC69847.1"/>
    <property type="molecule type" value="Genomic_DNA"/>
</dbReference>
<dbReference type="RefSeq" id="WP_012400068.1">
    <property type="nucleotide sequence ID" value="NZ_CADFGH010000020.1"/>
</dbReference>
<dbReference type="SMR" id="B2JEH0"/>
<dbReference type="STRING" id="391038.Bphy_0657"/>
<dbReference type="KEGG" id="bph:Bphy_0657"/>
<dbReference type="eggNOG" id="COG0851">
    <property type="taxonomic scope" value="Bacteria"/>
</dbReference>
<dbReference type="HOGENOM" id="CLU_137929_2_1_4"/>
<dbReference type="OrthoDB" id="9802655at2"/>
<dbReference type="Proteomes" id="UP000001192">
    <property type="component" value="Chromosome 1"/>
</dbReference>
<dbReference type="GO" id="GO:0051301">
    <property type="term" value="P:cell division"/>
    <property type="evidence" value="ECO:0007669"/>
    <property type="project" value="UniProtKB-KW"/>
</dbReference>
<dbReference type="GO" id="GO:0032955">
    <property type="term" value="P:regulation of division septum assembly"/>
    <property type="evidence" value="ECO:0007669"/>
    <property type="project" value="InterPro"/>
</dbReference>
<dbReference type="FunFam" id="3.30.1070.10:FF:000001">
    <property type="entry name" value="Cell division topological specificity factor"/>
    <property type="match status" value="1"/>
</dbReference>
<dbReference type="Gene3D" id="3.30.1070.10">
    <property type="entry name" value="Cell division topological specificity factor MinE"/>
    <property type="match status" value="1"/>
</dbReference>
<dbReference type="HAMAP" id="MF_00262">
    <property type="entry name" value="MinE"/>
    <property type="match status" value="1"/>
</dbReference>
<dbReference type="InterPro" id="IPR005527">
    <property type="entry name" value="MinE"/>
</dbReference>
<dbReference type="InterPro" id="IPR036707">
    <property type="entry name" value="MinE_sf"/>
</dbReference>
<dbReference type="NCBIfam" id="TIGR01215">
    <property type="entry name" value="minE"/>
    <property type="match status" value="1"/>
</dbReference>
<dbReference type="NCBIfam" id="NF001422">
    <property type="entry name" value="PRK00296.1"/>
    <property type="match status" value="1"/>
</dbReference>
<dbReference type="NCBIfam" id="NF010595">
    <property type="entry name" value="PRK13989.1"/>
    <property type="match status" value="1"/>
</dbReference>
<dbReference type="Pfam" id="PF03776">
    <property type="entry name" value="MinE"/>
    <property type="match status" value="1"/>
</dbReference>
<dbReference type="SUPFAM" id="SSF55229">
    <property type="entry name" value="Cell division protein MinE topological specificity domain"/>
    <property type="match status" value="1"/>
</dbReference>
<accession>B2JEH0</accession>
<organism>
    <name type="scientific">Paraburkholderia phymatum (strain DSM 17167 / CIP 108236 / LMG 21445 / STM815)</name>
    <name type="common">Burkholderia phymatum</name>
    <dbReference type="NCBI Taxonomy" id="391038"/>
    <lineage>
        <taxon>Bacteria</taxon>
        <taxon>Pseudomonadati</taxon>
        <taxon>Pseudomonadota</taxon>
        <taxon>Betaproteobacteria</taxon>
        <taxon>Burkholderiales</taxon>
        <taxon>Burkholderiaceae</taxon>
        <taxon>Paraburkholderia</taxon>
    </lineage>
</organism>
<reference key="1">
    <citation type="journal article" date="2014" name="Stand. Genomic Sci.">
        <title>Complete genome sequence of Burkholderia phymatum STM815(T), a broad host range and efficient nitrogen-fixing symbiont of Mimosa species.</title>
        <authorList>
            <person name="Moulin L."/>
            <person name="Klonowska A."/>
            <person name="Caroline B."/>
            <person name="Booth K."/>
            <person name="Vriezen J.A."/>
            <person name="Melkonian R."/>
            <person name="James E.K."/>
            <person name="Young J.P."/>
            <person name="Bena G."/>
            <person name="Hauser L."/>
            <person name="Land M."/>
            <person name="Kyrpides N."/>
            <person name="Bruce D."/>
            <person name="Chain P."/>
            <person name="Copeland A."/>
            <person name="Pitluck S."/>
            <person name="Woyke T."/>
            <person name="Lizotte-Waniewski M."/>
            <person name="Bristow J."/>
            <person name="Riley M."/>
        </authorList>
    </citation>
    <scope>NUCLEOTIDE SEQUENCE [LARGE SCALE GENOMIC DNA]</scope>
    <source>
        <strain>DSM 17167 / CIP 108236 / LMG 21445 / STM815</strain>
    </source>
</reference>
<evidence type="ECO:0000255" key="1">
    <source>
        <dbReference type="HAMAP-Rule" id="MF_00262"/>
    </source>
</evidence>
<sequence length="84" mass="9464">MSILSFLLGEKKKSASIAKERLQLIIAHERVGGKAPADYLPALQRELVAVISKYVKISDDDIRVNLERHDDLEVLEVKIEIPQV</sequence>
<protein>
    <recommendedName>
        <fullName evidence="1">Cell division topological specificity factor</fullName>
    </recommendedName>
</protein>